<feature type="chain" id="PRO_0000338325" description="Replicase polyprotein 1a">
    <location>
        <begin position="1"/>
        <end position="3951"/>
    </location>
</feature>
<feature type="chain" id="PRO_0000338326" description="Non-structural protein 2">
    <location>
        <begin position="1"/>
        <end position="673"/>
    </location>
</feature>
<feature type="chain" id="PRO_0000338327" description="Papain-like protease">
    <location>
        <begin position="674"/>
        <end position="2265"/>
    </location>
</feature>
<feature type="chain" id="PRO_0000338328" description="Non-structural protein 4">
    <location>
        <begin position="2266"/>
        <end position="2779"/>
    </location>
</feature>
<feature type="chain" id="PRO_0000338329" description="3C-like proteinase">
    <location>
        <begin position="2780"/>
        <end position="3086"/>
    </location>
</feature>
<feature type="chain" id="PRO_0000338330" description="Non-structural protein 6">
    <location>
        <begin position="3087"/>
        <end position="3379"/>
    </location>
</feature>
<feature type="chain" id="PRO_0000338331" description="Non-structural protein 7">
    <location>
        <begin position="3380"/>
        <end position="3462"/>
    </location>
</feature>
<feature type="chain" id="PRO_0000338332" description="Non-structural protein 8">
    <location>
        <begin position="3463"/>
        <end position="3672"/>
    </location>
</feature>
<feature type="chain" id="PRO_0000338333" description="Non-structural protein 9">
    <location>
        <begin position="3673"/>
        <end position="3783"/>
    </location>
</feature>
<feature type="chain" id="PRO_0000338334" description="Non-structural protein 10">
    <location>
        <begin position="3784"/>
        <end position="3928"/>
    </location>
</feature>
<feature type="chain" id="PRO_0000338335" description="Non-structural protein 11">
    <location>
        <begin position="3929"/>
        <end position="3951"/>
    </location>
</feature>
<feature type="topological domain" description="Cytoplasmic" evidence="2">
    <location>
        <begin position="1"/>
        <end position="1750"/>
    </location>
</feature>
<feature type="transmembrane region" description="Helical" evidence="6">
    <location>
        <begin position="1751"/>
        <end position="1771"/>
    </location>
</feature>
<feature type="topological domain" description="Lumenal" evidence="2">
    <location>
        <begin position="1772"/>
        <end position="1843"/>
    </location>
</feature>
<feature type="transmembrane region" description="Helical" evidence="6">
    <location>
        <begin position="1844"/>
        <end position="1864"/>
    </location>
</feature>
<feature type="topological domain" description="Cytoplasmic" evidence="2">
    <location>
        <begin position="1865"/>
        <end position="2280"/>
    </location>
</feature>
<feature type="transmembrane region" description="Helical" evidence="6">
    <location>
        <begin position="2281"/>
        <end position="2301"/>
    </location>
</feature>
<feature type="topological domain" description="Lumenal" evidence="2">
    <location>
        <begin position="2302"/>
        <end position="2559"/>
    </location>
</feature>
<feature type="transmembrane region" description="Helical" evidence="6">
    <location>
        <begin position="2560"/>
        <end position="2580"/>
    </location>
</feature>
<feature type="topological domain" description="Cytoplasmic" evidence="2">
    <location>
        <begin position="2581"/>
        <end position="2611"/>
    </location>
</feature>
<feature type="transmembrane region" description="Helical" evidence="6">
    <location>
        <begin position="2612"/>
        <end position="2632"/>
    </location>
</feature>
<feature type="topological domain" description="Lumenal" evidence="2">
    <location>
        <begin position="2633"/>
        <end position="2643"/>
    </location>
</feature>
<feature type="transmembrane region" description="Helical" evidence="6">
    <location>
        <begin position="2644"/>
        <end position="2664"/>
    </location>
</feature>
<feature type="topological domain" description="Cytoplasmic" evidence="2">
    <location>
        <begin position="2665"/>
        <end position="3096"/>
    </location>
</feature>
<feature type="transmembrane region" description="Helical" evidence="6">
    <location>
        <begin position="3097"/>
        <end position="3117"/>
    </location>
</feature>
<feature type="topological domain" description="Lumenal" evidence="2">
    <location>
        <begin position="3118"/>
        <end position="3121"/>
    </location>
</feature>
<feature type="transmembrane region" description="Helical" evidence="6">
    <location>
        <begin position="3122"/>
        <end position="3142"/>
    </location>
</feature>
<feature type="topological domain" description="Cytoplasmic" evidence="2">
    <location>
        <begin position="3143"/>
        <end position="3151"/>
    </location>
</feature>
<feature type="transmembrane region" description="Helical" evidence="6">
    <location>
        <begin position="3152"/>
        <end position="3172"/>
    </location>
</feature>
<feature type="topological domain" description="Lumenal" evidence="2">
    <location>
        <begin position="3173"/>
        <end position="3188"/>
    </location>
</feature>
<feature type="transmembrane region" description="Helical" evidence="6">
    <location>
        <begin position="3189"/>
        <end position="3209"/>
    </location>
</feature>
<feature type="topological domain" description="Cytoplasmic" evidence="2">
    <location>
        <begin position="3210"/>
        <end position="3257"/>
    </location>
</feature>
<feature type="transmembrane region" description="Helical" evidence="6">
    <location>
        <begin position="3258"/>
        <end position="3278"/>
    </location>
</feature>
<feature type="topological domain" description="Lumenal" evidence="2">
    <location>
        <begin position="3279"/>
        <end position="3296"/>
    </location>
</feature>
<feature type="transmembrane region" description="Helical" evidence="6">
    <location>
        <begin position="3297"/>
        <end position="3317"/>
    </location>
</feature>
<feature type="topological domain" description="Cytoplasmic" evidence="2">
    <location>
        <begin position="3318"/>
        <end position="3951"/>
    </location>
</feature>
<feature type="domain" description="Ubiquitin-like 1" evidence="7">
    <location>
        <begin position="675"/>
        <end position="780"/>
    </location>
</feature>
<feature type="domain" description="Macro" evidence="9">
    <location>
        <begin position="1003"/>
        <end position="1179"/>
    </location>
</feature>
<feature type="domain" description="Ubiquitin-like 2" evidence="7">
    <location>
        <begin position="1175"/>
        <end position="1227"/>
    </location>
</feature>
<feature type="domain" description="Peptidase C16" evidence="8">
    <location>
        <begin position="1236"/>
        <end position="1497"/>
    </location>
</feature>
<feature type="domain" description="3Ecto" evidence="17">
    <location>
        <begin position="1769"/>
        <end position="1833"/>
    </location>
</feature>
<feature type="domain" description="CoV Nsp3 Y" evidence="16">
    <location>
        <begin position="1911"/>
        <end position="2263"/>
    </location>
</feature>
<feature type="domain" description="Nsp4C" evidence="11">
    <location>
        <begin position="2684"/>
        <end position="2779"/>
    </location>
</feature>
<feature type="domain" description="Peptidase C30" evidence="10">
    <location>
        <begin position="2780"/>
        <end position="3086"/>
    </location>
</feature>
<feature type="domain" description="RdRp Nsp7 cofactor" evidence="12">
    <location>
        <begin position="3380"/>
        <end position="3462"/>
    </location>
</feature>
<feature type="domain" description="RdRp Nsp8 cofactor" evidence="13">
    <location>
        <begin position="3463"/>
        <end position="3672"/>
    </location>
</feature>
<feature type="domain" description="Nsp9 ssRNA-binding" evidence="14">
    <location>
        <begin position="3673"/>
        <end position="3783"/>
    </location>
</feature>
<feature type="domain" description="ExoN/MTase coactivator" evidence="15">
    <location>
        <begin position="3785"/>
        <end position="3926"/>
    </location>
</feature>
<feature type="zinc finger region" description="C4-type; degenerate" evidence="8">
    <location>
        <begin position="1353"/>
        <end position="1390"/>
    </location>
</feature>
<feature type="zinc finger region" evidence="1">
    <location>
        <begin position="3858"/>
        <end position="3878"/>
    </location>
</feature>
<feature type="zinc finger region" evidence="1">
    <location>
        <begin position="3904"/>
        <end position="3917"/>
    </location>
</feature>
<feature type="region of interest" description="Disordered" evidence="18">
    <location>
        <begin position="783"/>
        <end position="802"/>
    </location>
</feature>
<feature type="region of interest" description="HD1" evidence="2">
    <location>
        <begin position="1751"/>
        <end position="1864"/>
    </location>
</feature>
<feature type="region of interest" description="Y1" evidence="16">
    <location>
        <begin position="1911"/>
        <end position="2001"/>
    </location>
</feature>
<feature type="region of interest" description="ZF1" evidence="16">
    <location>
        <begin position="1915"/>
        <end position="1928"/>
    </location>
</feature>
<feature type="region of interest" description="ZF2" evidence="16">
    <location>
        <begin position="1961"/>
        <end position="1971"/>
    </location>
</feature>
<feature type="region of interest" description="CoV-Y" evidence="16">
    <location>
        <begin position="2002"/>
        <end position="2263"/>
    </location>
</feature>
<feature type="region of interest" description="Y2" evidence="16">
    <location>
        <begin position="2002"/>
        <end position="2104"/>
    </location>
</feature>
<feature type="region of interest" description="Y3" evidence="16">
    <location>
        <begin position="2105"/>
        <end position="2163"/>
    </location>
</feature>
<feature type="region of interest" description="Y4" evidence="16">
    <location>
        <begin position="2164"/>
        <end position="2263"/>
    </location>
</feature>
<feature type="region of interest" description="HD2" evidence="2">
    <location>
        <begin position="2281"/>
        <end position="2664"/>
    </location>
</feature>
<feature type="region of interest" description="HD3" evidence="2">
    <location>
        <begin position="3097"/>
        <end position="3317"/>
    </location>
</feature>
<feature type="active site" description="For PL-PRO activity" evidence="8">
    <location>
        <position position="1274"/>
    </location>
</feature>
<feature type="active site" description="For PL-PRO activity" evidence="8">
    <location>
        <position position="1437"/>
    </location>
</feature>
<feature type="active site" description="For PL-PRO activity" evidence="8">
    <location>
        <position position="1448"/>
    </location>
</feature>
<feature type="active site" description="For 3CL-PRO activity" evidence="10">
    <location>
        <position position="2820"/>
    </location>
</feature>
<feature type="active site" description="For 3CL-PRO activity" evidence="10">
    <location>
        <position position="2922"/>
    </location>
</feature>
<feature type="binding site" evidence="16">
    <location>
        <position position="1915"/>
    </location>
    <ligand>
        <name>Zn(2+)</name>
        <dbReference type="ChEBI" id="CHEBI:29105"/>
        <label>1</label>
    </ligand>
</feature>
<feature type="binding site" evidence="16">
    <location>
        <position position="1920"/>
    </location>
    <ligand>
        <name>Zn(2+)</name>
        <dbReference type="ChEBI" id="CHEBI:29105"/>
        <label>1</label>
    </ligand>
</feature>
<feature type="binding site" evidence="16">
    <location>
        <position position="1925"/>
    </location>
    <ligand>
        <name>Zn(2+)</name>
        <dbReference type="ChEBI" id="CHEBI:29105"/>
        <label>1</label>
    </ligand>
</feature>
<feature type="binding site" evidence="16">
    <location>
        <position position="1928"/>
    </location>
    <ligand>
        <name>Zn(2+)</name>
        <dbReference type="ChEBI" id="CHEBI:29105"/>
        <label>1</label>
    </ligand>
</feature>
<feature type="binding site" evidence="16">
    <location>
        <position position="1961"/>
    </location>
    <ligand>
        <name>Zn(2+)</name>
        <dbReference type="ChEBI" id="CHEBI:29105"/>
        <label>2</label>
    </ligand>
</feature>
<feature type="binding site" evidence="16">
    <location>
        <position position="1964"/>
    </location>
    <ligand>
        <name>Zn(2+)</name>
        <dbReference type="ChEBI" id="CHEBI:29105"/>
        <label>2</label>
    </ligand>
</feature>
<feature type="binding site" evidence="16">
    <location>
        <position position="1968"/>
    </location>
    <ligand>
        <name>Zn(2+)</name>
        <dbReference type="ChEBI" id="CHEBI:29105"/>
        <label>2</label>
    </ligand>
</feature>
<feature type="binding site" evidence="16">
    <location>
        <position position="1971"/>
    </location>
    <ligand>
        <name>Zn(2+)</name>
        <dbReference type="ChEBI" id="CHEBI:29105"/>
        <label>2</label>
    </ligand>
</feature>
<feature type="binding site" evidence="15">
    <location>
        <position position="3858"/>
    </location>
    <ligand>
        <name>Zn(2+)</name>
        <dbReference type="ChEBI" id="CHEBI:29105"/>
        <label>3</label>
    </ligand>
</feature>
<feature type="binding site" evidence="15">
    <location>
        <position position="3861"/>
    </location>
    <ligand>
        <name>Zn(2+)</name>
        <dbReference type="ChEBI" id="CHEBI:29105"/>
        <label>3</label>
    </ligand>
</feature>
<feature type="binding site" evidence="15">
    <location>
        <position position="3867"/>
    </location>
    <ligand>
        <name>Zn(2+)</name>
        <dbReference type="ChEBI" id="CHEBI:29105"/>
        <label>3</label>
    </ligand>
</feature>
<feature type="binding site" evidence="15">
    <location>
        <position position="3878"/>
    </location>
    <ligand>
        <name>Zn(2+)</name>
        <dbReference type="ChEBI" id="CHEBI:29105"/>
        <label>3</label>
    </ligand>
</feature>
<feature type="binding site" evidence="15">
    <location>
        <position position="3904"/>
    </location>
    <ligand>
        <name>Zn(2+)</name>
        <dbReference type="ChEBI" id="CHEBI:29105"/>
        <label>4</label>
    </ligand>
</feature>
<feature type="binding site" evidence="15">
    <location>
        <position position="3907"/>
    </location>
    <ligand>
        <name>Zn(2+)</name>
        <dbReference type="ChEBI" id="CHEBI:29105"/>
        <label>4</label>
    </ligand>
</feature>
<feature type="binding site" evidence="15">
    <location>
        <position position="3915"/>
    </location>
    <ligand>
        <name>Zn(2+)</name>
        <dbReference type="ChEBI" id="CHEBI:29105"/>
        <label>4</label>
    </ligand>
</feature>
<feature type="binding site" evidence="15">
    <location>
        <position position="3917"/>
    </location>
    <ligand>
        <name>Zn(2+)</name>
        <dbReference type="ChEBI" id="CHEBI:29105"/>
        <label>4</label>
    </ligand>
</feature>
<feature type="site" description="Cleavage; by PL-PRO" evidence="2">
    <location>
        <begin position="673"/>
        <end position="674"/>
    </location>
</feature>
<feature type="site" description="Cleavage; by PL-PRO" evidence="2">
    <location>
        <begin position="2265"/>
        <end position="2266"/>
    </location>
</feature>
<feature type="site" description="Cleavage; by 3CL-PRO" evidence="2">
    <location>
        <begin position="2779"/>
        <end position="2780"/>
    </location>
</feature>
<feature type="site" description="Cleavage; by 3CL-PRO" evidence="2">
    <location>
        <begin position="3086"/>
        <end position="3087"/>
    </location>
</feature>
<feature type="site" description="Cleavage; by 3CL-PRO" evidence="2">
    <location>
        <begin position="3379"/>
        <end position="3380"/>
    </location>
</feature>
<feature type="site" description="Cleavage; by 3CL-PRO" evidence="2">
    <location>
        <begin position="3462"/>
        <end position="3463"/>
    </location>
</feature>
<feature type="site" description="Cleavage; by 3CL-PRO" evidence="2">
    <location>
        <begin position="3672"/>
        <end position="3673"/>
    </location>
</feature>
<feature type="site" description="Cleavage; by 3CL-PRO" evidence="2">
    <location>
        <begin position="3783"/>
        <end position="3784"/>
    </location>
</feature>
<feature type="site" description="Cleavage; by 3CL-PRO" evidence="2">
    <location>
        <begin position="3928"/>
        <end position="3929"/>
    </location>
</feature>
<feature type="disulfide bond" evidence="17">
    <location>
        <begin position="1785"/>
        <end position="1811"/>
    </location>
</feature>
<feature type="disulfide bond" evidence="17">
    <location>
        <begin position="1802"/>
        <end position="1808"/>
    </location>
</feature>
<accession>P0C6V4</accession>
<accession>Q91QT2</accession>
<name>R1A_IBVBC</name>
<dbReference type="EC" id="3.4.19.12" evidence="2"/>
<dbReference type="EC" id="3.4.22.-" evidence="2"/>
<dbReference type="EMBL" id="AJ311317">
    <property type="protein sequence ID" value="CAC39113.1"/>
    <property type="molecule type" value="Genomic_RNA"/>
</dbReference>
<dbReference type="SMR" id="P0C6V4"/>
<dbReference type="MEROPS" id="C30.002"/>
<dbReference type="Proteomes" id="UP000114388">
    <property type="component" value="Genome"/>
</dbReference>
<dbReference type="GO" id="GO:0044167">
    <property type="term" value="C:host cell endoplasmic reticulum membrane"/>
    <property type="evidence" value="ECO:0007669"/>
    <property type="project" value="UniProtKB-SubCell"/>
</dbReference>
<dbReference type="GO" id="GO:0044220">
    <property type="term" value="C:host cell perinuclear region of cytoplasm"/>
    <property type="evidence" value="ECO:0007669"/>
    <property type="project" value="UniProtKB-SubCell"/>
</dbReference>
<dbReference type="GO" id="GO:0016020">
    <property type="term" value="C:membrane"/>
    <property type="evidence" value="ECO:0007669"/>
    <property type="project" value="UniProtKB-KW"/>
</dbReference>
<dbReference type="GO" id="GO:0004197">
    <property type="term" value="F:cysteine-type endopeptidase activity"/>
    <property type="evidence" value="ECO:0007669"/>
    <property type="project" value="InterPro"/>
</dbReference>
<dbReference type="GO" id="GO:0016829">
    <property type="term" value="F:lyase activity"/>
    <property type="evidence" value="ECO:0007669"/>
    <property type="project" value="UniProtKB-KW"/>
</dbReference>
<dbReference type="GO" id="GO:0008242">
    <property type="term" value="F:omega peptidase activity"/>
    <property type="evidence" value="ECO:0007669"/>
    <property type="project" value="InterPro"/>
</dbReference>
<dbReference type="GO" id="GO:0003723">
    <property type="term" value="F:RNA binding"/>
    <property type="evidence" value="ECO:0007669"/>
    <property type="project" value="UniProtKB-KW"/>
</dbReference>
<dbReference type="GO" id="GO:0016740">
    <property type="term" value="F:transferase activity"/>
    <property type="evidence" value="ECO:0007669"/>
    <property type="project" value="InterPro"/>
</dbReference>
<dbReference type="GO" id="GO:0008270">
    <property type="term" value="F:zinc ion binding"/>
    <property type="evidence" value="ECO:0007669"/>
    <property type="project" value="UniProtKB-KW"/>
</dbReference>
<dbReference type="GO" id="GO:0006508">
    <property type="term" value="P:proteolysis"/>
    <property type="evidence" value="ECO:0007669"/>
    <property type="project" value="UniProtKB-KW"/>
</dbReference>
<dbReference type="GO" id="GO:0010506">
    <property type="term" value="P:regulation of autophagy"/>
    <property type="evidence" value="ECO:0007669"/>
    <property type="project" value="InterPro"/>
</dbReference>
<dbReference type="GO" id="GO:0039520">
    <property type="term" value="P:symbiont-mediated activation of host autophagy"/>
    <property type="evidence" value="ECO:0007669"/>
    <property type="project" value="UniProtKB-KW"/>
</dbReference>
<dbReference type="GO" id="GO:0019079">
    <property type="term" value="P:viral genome replication"/>
    <property type="evidence" value="ECO:0007669"/>
    <property type="project" value="InterPro"/>
</dbReference>
<dbReference type="GO" id="GO:0019082">
    <property type="term" value="P:viral protein processing"/>
    <property type="evidence" value="ECO:0007669"/>
    <property type="project" value="InterPro"/>
</dbReference>
<dbReference type="GO" id="GO:0075523">
    <property type="term" value="P:viral translational frameshifting"/>
    <property type="evidence" value="ECO:0007669"/>
    <property type="project" value="UniProtKB-KW"/>
</dbReference>
<dbReference type="CDD" id="cd21512">
    <property type="entry name" value="cv_gamma-delta_Nsp2_IBV-like"/>
    <property type="match status" value="1"/>
</dbReference>
<dbReference type="CDD" id="cd21473">
    <property type="entry name" value="cv_Nsp4_TM"/>
    <property type="match status" value="1"/>
</dbReference>
<dbReference type="CDD" id="cd21559">
    <property type="entry name" value="gammaCoV-Nsp6"/>
    <property type="match status" value="1"/>
</dbReference>
<dbReference type="CDD" id="cd21902">
    <property type="entry name" value="gammaCoV_Nsp10"/>
    <property type="match status" value="1"/>
</dbReference>
<dbReference type="CDD" id="cd21667">
    <property type="entry name" value="gammaCoV_Nsp5_Mpro"/>
    <property type="match status" value="1"/>
</dbReference>
<dbReference type="CDD" id="cd21828">
    <property type="entry name" value="gammaCoV_Nsp7"/>
    <property type="match status" value="1"/>
</dbReference>
<dbReference type="CDD" id="cd21832">
    <property type="entry name" value="gammaCoV_Nsp8"/>
    <property type="match status" value="1"/>
</dbReference>
<dbReference type="CDD" id="cd21899">
    <property type="entry name" value="gammaCoV_Nsp9"/>
    <property type="match status" value="1"/>
</dbReference>
<dbReference type="CDD" id="cd21733">
    <property type="entry name" value="gammaCoV_PLPro"/>
    <property type="match status" value="1"/>
</dbReference>
<dbReference type="CDD" id="cd21557">
    <property type="entry name" value="Macro_X_Nsp3-like"/>
    <property type="match status" value="1"/>
</dbReference>
<dbReference type="CDD" id="cd21710">
    <property type="entry name" value="TM_Y_gammaCoV_Nsp3_C"/>
    <property type="match status" value="1"/>
</dbReference>
<dbReference type="Gene3D" id="1.10.8.1190">
    <property type="match status" value="1"/>
</dbReference>
<dbReference type="Gene3D" id="2.60.120.1680">
    <property type="match status" value="1"/>
</dbReference>
<dbReference type="Gene3D" id="6.10.250.2820">
    <property type="match status" value="1"/>
</dbReference>
<dbReference type="Gene3D" id="1.10.150.420">
    <property type="entry name" value="Coronavirus nonstructural protein 4 C-terminus"/>
    <property type="match status" value="1"/>
</dbReference>
<dbReference type="Gene3D" id="3.40.220.10">
    <property type="entry name" value="Leucine Aminopeptidase, subunit E, domain 1"/>
    <property type="match status" value="1"/>
</dbReference>
<dbReference type="Gene3D" id="1.10.1840.10">
    <property type="entry name" value="main proteinase (3clpro) structure, domain 3"/>
    <property type="match status" value="1"/>
</dbReference>
<dbReference type="Gene3D" id="1.10.8.370">
    <property type="entry name" value="nsp7 replicase"/>
    <property type="match status" value="1"/>
</dbReference>
<dbReference type="Gene3D" id="3.30.70.3540">
    <property type="entry name" value="Nsp8 replicase, head domain"/>
    <property type="match status" value="1"/>
</dbReference>
<dbReference type="Gene3D" id="2.40.10.250">
    <property type="entry name" value="Replicase NSP9"/>
    <property type="match status" value="1"/>
</dbReference>
<dbReference type="Gene3D" id="2.40.10.10">
    <property type="entry name" value="Trypsin-like serine proteases"/>
    <property type="match status" value="2"/>
</dbReference>
<dbReference type="InterPro" id="IPR049894">
    <property type="entry name" value="COV_NSP3_3ECTO"/>
</dbReference>
<dbReference type="InterPro" id="IPR043611">
    <property type="entry name" value="CoV_NSP3_C"/>
</dbReference>
<dbReference type="InterPro" id="IPR047566">
    <property type="entry name" value="CoV_NSP3_Y"/>
</dbReference>
<dbReference type="InterPro" id="IPR032505">
    <property type="entry name" value="CoV_NSP4_C"/>
</dbReference>
<dbReference type="InterPro" id="IPR043612">
    <property type="entry name" value="CoV_NSP4_N"/>
</dbReference>
<dbReference type="InterPro" id="IPR002589">
    <property type="entry name" value="Macro_dom"/>
</dbReference>
<dbReference type="InterPro" id="IPR043472">
    <property type="entry name" value="Macro_dom-like"/>
</dbReference>
<dbReference type="InterPro" id="IPR044371">
    <property type="entry name" value="Macro_X_NSP3-like"/>
</dbReference>
<dbReference type="InterPro" id="IPR036333">
    <property type="entry name" value="NSP10_sf_CoV"/>
</dbReference>
<dbReference type="InterPro" id="IPR040795">
    <property type="entry name" value="NSP2_gammaCoV"/>
</dbReference>
<dbReference type="InterPro" id="IPR044383">
    <property type="entry name" value="NSP2_IBV-like"/>
</dbReference>
<dbReference type="InterPro" id="IPR044357">
    <property type="entry name" value="NSP3_Ubl1_dom_CoV"/>
</dbReference>
<dbReference type="InterPro" id="IPR044353">
    <property type="entry name" value="Nsp3_Ubl2_dom_CoV"/>
</dbReference>
<dbReference type="InterPro" id="IPR038123">
    <property type="entry name" value="NSP4_C_sf_CoV"/>
</dbReference>
<dbReference type="InterPro" id="IPR044308">
    <property type="entry name" value="NSP5_Mpro_GammaCoV"/>
</dbReference>
<dbReference type="InterPro" id="IPR043610">
    <property type="entry name" value="NSP6_CoV"/>
</dbReference>
<dbReference type="InterPro" id="IPR044368">
    <property type="entry name" value="NSP6_gammaCoV"/>
</dbReference>
<dbReference type="InterPro" id="IPR014828">
    <property type="entry name" value="NSP7_CoV"/>
</dbReference>
<dbReference type="InterPro" id="IPR037204">
    <property type="entry name" value="NSP7_sf_CoV"/>
</dbReference>
<dbReference type="InterPro" id="IPR014829">
    <property type="entry name" value="NSP8_CoV"/>
</dbReference>
<dbReference type="InterPro" id="IPR037230">
    <property type="entry name" value="NSP8_sf_CoV"/>
</dbReference>
<dbReference type="InterPro" id="IPR014822">
    <property type="entry name" value="NSP9_CoV"/>
</dbReference>
<dbReference type="InterPro" id="IPR036499">
    <property type="entry name" value="NSP9_sf_CoV"/>
</dbReference>
<dbReference type="InterPro" id="IPR013016">
    <property type="entry name" value="Peptidase_C16_CoV"/>
</dbReference>
<dbReference type="InterPro" id="IPR008740">
    <property type="entry name" value="Peptidase_C30_CoV"/>
</dbReference>
<dbReference type="InterPro" id="IPR043477">
    <property type="entry name" value="Peptidase_C30_dom3_CoV"/>
</dbReference>
<dbReference type="InterPro" id="IPR009003">
    <property type="entry name" value="Peptidase_S1_PA"/>
</dbReference>
<dbReference type="InterPro" id="IPR043504">
    <property type="entry name" value="Peptidase_S1_PA_chymotrypsin"/>
</dbReference>
<dbReference type="InterPro" id="IPR043503">
    <property type="entry name" value="PLpro_palm_finger_dom_CoV"/>
</dbReference>
<dbReference type="InterPro" id="IPR043178">
    <property type="entry name" value="PLpro_thumb_sf_CoV"/>
</dbReference>
<dbReference type="InterPro" id="IPR018995">
    <property type="entry name" value="RNA_synth_NSP10_CoV"/>
</dbReference>
<dbReference type="Pfam" id="PF09401">
    <property type="entry name" value="CoV_NSP10"/>
    <property type="match status" value="1"/>
</dbReference>
<dbReference type="Pfam" id="PF19218">
    <property type="entry name" value="CoV_NSP3_C"/>
    <property type="match status" value="1"/>
</dbReference>
<dbReference type="Pfam" id="PF16348">
    <property type="entry name" value="CoV_NSP4_C"/>
    <property type="match status" value="1"/>
</dbReference>
<dbReference type="Pfam" id="PF19217">
    <property type="entry name" value="CoV_NSP4_N"/>
    <property type="match status" value="1"/>
</dbReference>
<dbReference type="Pfam" id="PF19213">
    <property type="entry name" value="CoV_NSP6"/>
    <property type="match status" value="1"/>
</dbReference>
<dbReference type="Pfam" id="PF08716">
    <property type="entry name" value="CoV_NSP7"/>
    <property type="match status" value="1"/>
</dbReference>
<dbReference type="Pfam" id="PF08717">
    <property type="entry name" value="CoV_NSP8"/>
    <property type="match status" value="1"/>
</dbReference>
<dbReference type="Pfam" id="PF08710">
    <property type="entry name" value="CoV_NSP9"/>
    <property type="match status" value="1"/>
</dbReference>
<dbReference type="Pfam" id="PF08715">
    <property type="entry name" value="CoV_peptidase"/>
    <property type="match status" value="1"/>
</dbReference>
<dbReference type="Pfam" id="PF01661">
    <property type="entry name" value="Macro"/>
    <property type="match status" value="1"/>
</dbReference>
<dbReference type="Pfam" id="PF17896">
    <property type="entry name" value="NSP2_gammaCoV"/>
    <property type="match status" value="1"/>
</dbReference>
<dbReference type="Pfam" id="PF05409">
    <property type="entry name" value="Peptidase_C30"/>
    <property type="match status" value="1"/>
</dbReference>
<dbReference type="SMART" id="SM00506">
    <property type="entry name" value="A1pp"/>
    <property type="match status" value="1"/>
</dbReference>
<dbReference type="SUPFAM" id="SSF144246">
    <property type="entry name" value="Coronavirus NSP10-like"/>
    <property type="match status" value="1"/>
</dbReference>
<dbReference type="SUPFAM" id="SSF140367">
    <property type="entry name" value="Coronavirus NSP7-like"/>
    <property type="match status" value="1"/>
</dbReference>
<dbReference type="SUPFAM" id="SSF143076">
    <property type="entry name" value="Coronavirus NSP8-like"/>
    <property type="match status" value="1"/>
</dbReference>
<dbReference type="SUPFAM" id="SSF52949">
    <property type="entry name" value="Macro domain-like"/>
    <property type="match status" value="1"/>
</dbReference>
<dbReference type="SUPFAM" id="SSF101816">
    <property type="entry name" value="Replicase NSP9"/>
    <property type="match status" value="1"/>
</dbReference>
<dbReference type="SUPFAM" id="SSF50494">
    <property type="entry name" value="Trypsin-like serine proteases"/>
    <property type="match status" value="1"/>
</dbReference>
<dbReference type="PROSITE" id="PS51993">
    <property type="entry name" value="COV_3ECTO"/>
    <property type="match status" value="1"/>
</dbReference>
<dbReference type="PROSITE" id="PS51952">
    <property type="entry name" value="COV_EXON_MTASE_COACT"/>
    <property type="match status" value="1"/>
</dbReference>
<dbReference type="PROSITE" id="PS51992">
    <property type="entry name" value="COV_NSP3_Y"/>
    <property type="match status" value="1"/>
</dbReference>
<dbReference type="PROSITE" id="PS51943">
    <property type="entry name" value="COV_NSP3A_UBL"/>
    <property type="match status" value="1"/>
</dbReference>
<dbReference type="PROSITE" id="PS51944">
    <property type="entry name" value="COV_NSP3D_UBL"/>
    <property type="match status" value="1"/>
</dbReference>
<dbReference type="PROSITE" id="PS51946">
    <property type="entry name" value="COV_NSP4C"/>
    <property type="match status" value="1"/>
</dbReference>
<dbReference type="PROSITE" id="PS51949">
    <property type="entry name" value="COV_NSP7"/>
    <property type="match status" value="1"/>
</dbReference>
<dbReference type="PROSITE" id="PS51950">
    <property type="entry name" value="COV_NSP8"/>
    <property type="match status" value="1"/>
</dbReference>
<dbReference type="PROSITE" id="PS51951">
    <property type="entry name" value="COV_NSP9_SSRNA_BD"/>
    <property type="match status" value="1"/>
</dbReference>
<dbReference type="PROSITE" id="PS51442">
    <property type="entry name" value="M_PRO"/>
    <property type="match status" value="1"/>
</dbReference>
<dbReference type="PROSITE" id="PS51154">
    <property type="entry name" value="MACRO"/>
    <property type="match status" value="1"/>
</dbReference>
<dbReference type="PROSITE" id="PS51124">
    <property type="entry name" value="PEPTIDASE_C16"/>
    <property type="match status" value="1"/>
</dbReference>
<proteinExistence type="inferred from homology"/>
<evidence type="ECO:0000250" key="1"/>
<evidence type="ECO:0000250" key="2">
    <source>
        <dbReference type="UniProtKB" id="P0C6U8"/>
    </source>
</evidence>
<evidence type="ECO:0000250" key="3">
    <source>
        <dbReference type="UniProtKB" id="P0C6Y1"/>
    </source>
</evidence>
<evidence type="ECO:0000250" key="4">
    <source>
        <dbReference type="UniProtKB" id="P0C6Y3"/>
    </source>
</evidence>
<evidence type="ECO:0000250" key="5">
    <source>
        <dbReference type="UniProtKB" id="P0DTD1"/>
    </source>
</evidence>
<evidence type="ECO:0000255" key="6"/>
<evidence type="ECO:0000255" key="7">
    <source>
        <dbReference type="PROSITE-ProRule" id="PRU00214"/>
    </source>
</evidence>
<evidence type="ECO:0000255" key="8">
    <source>
        <dbReference type="PROSITE-ProRule" id="PRU00444"/>
    </source>
</evidence>
<evidence type="ECO:0000255" key="9">
    <source>
        <dbReference type="PROSITE-ProRule" id="PRU00490"/>
    </source>
</evidence>
<evidence type="ECO:0000255" key="10">
    <source>
        <dbReference type="PROSITE-ProRule" id="PRU00772"/>
    </source>
</evidence>
<evidence type="ECO:0000255" key="11">
    <source>
        <dbReference type="PROSITE-ProRule" id="PRU01291"/>
    </source>
</evidence>
<evidence type="ECO:0000255" key="12">
    <source>
        <dbReference type="PROSITE-ProRule" id="PRU01294"/>
    </source>
</evidence>
<evidence type="ECO:0000255" key="13">
    <source>
        <dbReference type="PROSITE-ProRule" id="PRU01295"/>
    </source>
</evidence>
<evidence type="ECO:0000255" key="14">
    <source>
        <dbReference type="PROSITE-ProRule" id="PRU01296"/>
    </source>
</evidence>
<evidence type="ECO:0000255" key="15">
    <source>
        <dbReference type="PROSITE-ProRule" id="PRU01297"/>
    </source>
</evidence>
<evidence type="ECO:0000255" key="16">
    <source>
        <dbReference type="PROSITE-ProRule" id="PRU01336"/>
    </source>
</evidence>
<evidence type="ECO:0000255" key="17">
    <source>
        <dbReference type="PROSITE-ProRule" id="PRU01337"/>
    </source>
</evidence>
<evidence type="ECO:0000256" key="18">
    <source>
        <dbReference type="SAM" id="MobiDB-lite"/>
    </source>
</evidence>
<evidence type="ECO:0000305" key="19"/>
<reference key="1">
    <citation type="submission" date="2001-05" db="EMBL/GenBank/DDBJ databases">
        <title>Recovery of the avian coronavirus infectious bronchitis virus from cDNA assembled in vaccinia virus.</title>
        <authorList>
            <person name="Casais R."/>
            <person name="Thiel V."/>
            <person name="Siddell S."/>
            <person name="Cavanagh D."/>
            <person name="Britton P."/>
        </authorList>
    </citation>
    <scope>NUCLEOTIDE SEQUENCE [GENOMIC RNA]</scope>
</reference>
<sequence length="3951" mass="441126">MASSLKQGVSPKPRDVILVSKDIPEQLCDALFFYTSHNPKDYADAFAVRQKFDRSLQTGKQFKFETVCGLFLLKGVDKITPGVPAKVLKATSKLADLEDIFGVSPLARKYRELLKTACQWSLTVEALDVRAQTLDEIFDPTEILWLQVAAKIHVSSMAMRRLVGEVTAKVMDALGSNLSALFQIVKQQIARIFQKALAIFENVNELPQRIAALKMAFAKCARSITVVVVERTLVVKEFAGTCLASINGAVAKFFEELPNGFMGSKIFTTLAFFKEAAVRVVENIPNAPRGTKGFEVVGNAKGTQVVVRGMRNDLTLLDQKADIPVEPEGWSAILDGHLCYVFRSGDRFYAAPLSGNFALSDVHCCERVVCLSDGVTPEINDGLILAAIYSSFSVSELVTALKKGEPFKFLGHKFVYAKDAAVSFTLAKAATIADVLRLFQSARVIAEDVWSSFTEKSFEFWKLAYGKVRNLEEFVKTYVCKAQMSIVILAAVLGEDIWHLVSQVIYKLGVLFTKVVDFCDKHWKGFCVQLKRAKLIVTETFCVLKGVAQHCFQLLLDAIHSLYKSFKKCALGRIHGDLLFWKGGVHKIVQDGDEIWFDAIDSVDVEDLGVVQEKSIDFEVCDDVTLPENQPGHMVQIEDDGKNYMFFRFKKDENIYYTPMSQLGAINVVCKAGGKTVTFGETTVQEIPPPDVVPIKVSIECCGEPWNTIFKKAYKEPIEVDTDLTVEQLLSVIYEKMCDDLKLFPEAPEPPPFENVALVDKNGKDLDCIKSCHLIYRDYESDDDIEEEDAEECDTDSGEAEECDTNSECEEEDEDTKVLALIQDPASIKYPLPLDEDYSVYNGCIVHKDALDVVNLPSGEETFVVNNCFEGAVKPLPQKVVDVLGDWGEAVDAQEQLCQQEPLQHTFEEPVENSTGSSKTMTEQVVVEDQELPVVEQDQDVVVYTPTDLEVAKETAEEVDEFILIFAVPKEEVVSQKDGAQIKQEPIQVVKPQREKKAKKFKVKPATCEKPKFLEYKTCVGDLTVVIAKALDEFKEFCIVNAANEHMTHGSGVAKAIADFCGLDFVEYCEDYVKKHGPQQRLVTPSFVKGIQCVNNVVGPRHGDNNLHEKLVAAYKNVLVDGVVNYVVPVLSLGIFGVDFKMSIDAMREAFEGCTIRVLLFSLSQEHIDYFDVTCKQKTIYLTEDGVKYRSIVLKPGDSLGQFGQVYAKNKIVFTADDVEDKEILYVPTTDKSILEYYGLDAQKYVIYLQTLAQKWNVQYRDNFLILEWRDGNCWISSAIVLLQAAKIRFKGFLTEAWAKLLGGDPTDFVAWCYASCTAKVGDFSDANWLLANLAEHFDADYTNAFLKKRVSCNCGIKSYELRGLEACIQPVRATNLLHFKTQYSNCPTCGANNTDEVIEASLPYLLLFATDGPATVDCDEDAVGTVVFVGSTNSGHCYTQAAGQAFDNLAKDRKFGKKSPYITAMYTRFAFKNETSLPVAKQSKGKSKSVKEDVSNLATSSKASFDNLTDFEQWYDSNIYESLKVQESPDNFDKYVSFTTKEDSKLPLTLKVRGIKSVVDFRSKDGFIYKLTPDTDENSKAPVYYPVLDAISLKAIWVEGNANFVVGHPNYYSKSLHIPTFWENAENFVKMGDKIGGVTMGLWRAEHLNKPNLERIFNIAKKAIVGSSVVTTQCGKLIGKAATFIADKVGGGVVRNITDSIKGLCGITRGHFERKMSPQFLKTLMFFLFYFLKASVKSVVASYKTVLCKVVLATLLIVWFVYTSNPVMFTGIRVLDFLFEGSLCGPYKDYGKDSFDVLRYCADDFICRVCLHDKDSLHLYKHAYSVEQVYKDAASGFIFNWNWLYLVFLILFVKPVAGFVIICYCVKYLVLNSTVLQTGVCFLDWFVQTVFSHFNFMGAGFYFWLFYKIYIQVHHILYCKDVTCEVCKRVARSNRQEVSVVVGGRKQIVHVYTNSGYNFCKRHNWYCRNCDDYGHQNTFMSPEVAGELSEKLKRHVKPTAYAYHVVDEACLVDDFVNLKYKAATPGKDSASSAVKCFSVTDFLKKAVFLKEALKCEQISNDGFIVCNTQSAHALEEAKNAAIYYAQYLCKPILILDQALYEQLVVEPVSKSVIDKVCSILSSIISVDTAALNYKAGTLRDALLSITKDEEAVDMAIFCHNHDVDYTGDGFTNVIPSYGIDTGKLTPRDRGFLINADASIANLRVKNAPPVVWKFSELIKLSDSCLKYLISATVKSGVRFFITKSGAKQVIACHTQKLLVEKKAGGIVSGTFKCFKSYFKWLLIFYILFTACCSGYYYMEVSKSFVHPMYDVNSTLHVEGFKVIDKGVLREIVPEDTCFSNKFVNFDAFWGRPYDNSRNCPIVTAVIDGDGTVATGVPGFVSWVMDGVMFIHMTQTERKPWYIPTWFNREIVGYTQDSIITEGSFYTSIALFSARCLYLTASNTPQLYCFNGDNDAPGALPFGSIIPHRVYFQPNGVRLIVPQQILHTPYVVKFVSDSYCRGSVCEYTRPGYCVSLNPQWVLFNDEYTSKPGVFCGSTVRELMFSMVSTFFTGVNPNIYMQLATMFLILVVVVLIFAMVIKFQGVFKAYATTVFITMLVWVINAFILCVHSYNSVLAVILLVLYCYASLVTSRNTVIIMHCWLVFTFGLIVPTWLACCYLGFIIYMYTPLFLWCYGTTKNTRKLYDGNEFVGNYDLAAKSTFVIRGSEFVKLTNEIGDKFEAYLSAYARLKYYSGTGSEQDYLQACRAWLAYALDQYRNSGVEIVYTPPRYSIGVSRLQSGFKKLVSPSSAVEKCIVSVSYRGNNLNGLWLGDTIYCPRHVLGKFSGDQWNDVLNLANNHEFEVTTQHGVTLNVVSRRLKGAVLILQTAVANAETPKYKFIKANCGDSFTIACAYGGTVVGLYPVTMRSNGTIRASFLAGACGSVGFNIEKGVVNFFYMHHLELPNALHTGTDLMGEFYGGYVDEEVAQRVPPDNLVTNNIVAWLYAAIISVKESSFSLPKWLESTTVSVDDYNKWAGDNGFTPFSTSTAITKLSAITGVDVCKLLRTIMVKNSQWGGDPILGQYNFEDELTPESVFNQIGGVRLQSSFVRKATSWFWSRCVLACFLFVLCAIVLFTAVPLKFYVYAAVILLMAVLFISFTVKHVMAYMDTFLLPTLITVIIGVCAEVPFIYNTLISQVVIFLSQWYDPVVFDTMVPWMFLPLVLYTAFKCVQGCYMNSFNTSLLMLYQFVKLGFVIYTSSNTLTAYTEGNWELFFELVHTTVLANVSSNSLIGLFVFKCAKWMLYYCNATYLNNYVLMAVMVNCIGWLCTCYFGLYWWVNKVFGLTLGKYNFKVSVDQYRYMCLHKINPPKTVWEVFSTNILIQGIGGDRVLPIATVQAKLSDVKCTTVVLMQLLTKLNVEANSKMHVYLVELHNKILASDDVGECMDNLLGMLITLFCIDSTIDLSEYCDDILKRSTVLQSVTQEFSHIPSYAEYERAKNLYEKVLVDSKNGGVTQQELAAYRKAANIAKSVFDRDLAVQKKLDSMAERAMTTMYKEARVTDRRAKLVSSLHALLFSMLKKIDSEKLNVLFDQASSGVVPLATVPIVCSNKLTLVIPDPETWVKCVEGVHVTYSTVVWNIDTVIDADGTELHPTSTGSGLTYCISGANIAWPLKVNLTRNGHNKVDVVLQNNELMPHGVKTKACVAGVDQAHCSVESKCYYTNISGNSVVAAITSSNPNLKVASFLNEAGNQIYVDLDPPCKFGMKVGVKVEVVYLYFIKNTRSIVRGMVLGAISNVVVLQSKGHETEEVDAVGILSLCSFAVDPADTYCKYVAAGNQPLGNCVKMLTVHNGSGFAITSKPSPTPDQDSYGGASVCLYCRAHIAHPGSVGNLDGRCQFKGSFVQIPTTEKDPVGFCLRNKVCTVCQCWIGYGCQCDSLRQPKSSVQSVAGASDFDKNYLNGYGVAVRLG</sequence>
<organism>
    <name type="scientific">Avian infectious bronchitis virus (strain Beaudette CK)</name>
    <name type="common">IBV</name>
    <dbReference type="NCBI Taxonomy" id="160235"/>
    <lineage>
        <taxon>Viruses</taxon>
        <taxon>Riboviria</taxon>
        <taxon>Orthornavirae</taxon>
        <taxon>Pisuviricota</taxon>
        <taxon>Pisoniviricetes</taxon>
        <taxon>Nidovirales</taxon>
        <taxon>Cornidovirineae</taxon>
        <taxon>Coronaviridae</taxon>
        <taxon>Orthocoronavirinae</taxon>
        <taxon>Gammacoronavirus</taxon>
        <taxon>Igacovirus</taxon>
        <taxon>Avian coronavirus</taxon>
    </lineage>
</organism>
<protein>
    <recommendedName>
        <fullName>Replicase polyprotein 1a</fullName>
        <shortName>pp1a</shortName>
    </recommendedName>
    <alternativeName>
        <fullName>ORF1a polyprotein</fullName>
    </alternativeName>
    <component>
        <recommendedName>
            <fullName>Non-structural protein 2</fullName>
            <shortName>nsp2</shortName>
        </recommendedName>
        <alternativeName>
            <fullName>p87</fullName>
        </alternativeName>
    </component>
    <component>
        <recommendedName>
            <fullName>Papain-like protease</fullName>
            <shortName>PL-PRO</shortName>
            <ecNumber evidence="2">3.4.19.12</ecNumber>
            <ecNumber evidence="2">3.4.22.-</ecNumber>
        </recommendedName>
        <alternativeName>
            <fullName>Non-structural protein 3</fullName>
            <shortName>nsp3</shortName>
        </alternativeName>
        <alternativeName>
            <fullName>p195</fullName>
        </alternativeName>
    </component>
    <component>
        <recommendedName>
            <fullName>Non-structural protein 4</fullName>
            <shortName>nsp4</shortName>
        </recommendedName>
        <alternativeName>
            <fullName>Peptide HD2</fullName>
        </alternativeName>
        <alternativeName>
            <fullName>p41</fullName>
        </alternativeName>
    </component>
    <component>
        <recommendedName>
            <fullName>3C-like proteinase</fullName>
            <shortName>3CL-PRO</shortName>
            <shortName>3CLp</shortName>
            <ecNumber>3.4.22.-</ecNumber>
        </recommendedName>
        <alternativeName>
            <fullName>Main protease</fullName>
            <shortName>Mpro</shortName>
        </alternativeName>
        <alternativeName>
            <fullName>Non-structural protein 5</fullName>
            <shortName>nsp5</shortName>
        </alternativeName>
        <alternativeName>
            <fullName>p33</fullName>
        </alternativeName>
    </component>
    <component>
        <recommendedName>
            <fullName>Non-structural protein 6</fullName>
            <shortName>nsp6</shortName>
        </recommendedName>
        <alternativeName>
            <fullName>p34</fullName>
        </alternativeName>
    </component>
    <component>
        <recommendedName>
            <fullName>Non-structural protein 7</fullName>
            <shortName>nsp7</shortName>
        </recommendedName>
        <alternativeName>
            <fullName>p9</fullName>
        </alternativeName>
    </component>
    <component>
        <recommendedName>
            <fullName>Non-structural protein 8</fullName>
            <shortName>nsp8</shortName>
        </recommendedName>
        <alternativeName>
            <fullName>p24</fullName>
        </alternativeName>
    </component>
    <component>
        <recommendedName>
            <fullName>Non-structural protein 9</fullName>
            <shortName>nsp9</shortName>
        </recommendedName>
        <alternativeName>
            <fullName>p10</fullName>
        </alternativeName>
    </component>
    <component>
        <recommendedName>
            <fullName>Non-structural protein 10</fullName>
            <shortName>nsp10</shortName>
        </recommendedName>
        <alternativeName>
            <fullName>Growth factor-like peptide</fullName>
            <shortName>GFL</shortName>
        </alternativeName>
        <alternativeName>
            <fullName>p16</fullName>
        </alternativeName>
    </component>
    <component>
        <recommendedName>
            <fullName>Non-structural protein 11</fullName>
            <shortName>nsp11</shortName>
        </recommendedName>
    </component>
</protein>
<organismHost>
    <name type="scientific">Gallus gallus</name>
    <name type="common">Chicken</name>
    <dbReference type="NCBI Taxonomy" id="9031"/>
</organismHost>
<gene>
    <name type="ORF">1a</name>
</gene>
<keyword id="KW-1072">Activation of host autophagy by virus</keyword>
<keyword id="KW-1015">Disulfide bond</keyword>
<keyword id="KW-1035">Host cytoplasm</keyword>
<keyword id="KW-1038">Host endoplasmic reticulum</keyword>
<keyword id="KW-1043">Host membrane</keyword>
<keyword id="KW-0945">Host-virus interaction</keyword>
<keyword id="KW-0378">Hydrolase</keyword>
<keyword id="KW-0456">Lyase</keyword>
<keyword id="KW-0472">Membrane</keyword>
<keyword id="KW-0479">Metal-binding</keyword>
<keyword id="KW-0645">Protease</keyword>
<keyword id="KW-0677">Repeat</keyword>
<keyword id="KW-0688">Ribosomal frameshifting</keyword>
<keyword id="KW-0694">RNA-binding</keyword>
<keyword id="KW-0788">Thiol protease</keyword>
<keyword id="KW-0812">Transmembrane</keyword>
<keyword id="KW-1133">Transmembrane helix</keyword>
<keyword id="KW-0862">Zinc</keyword>
<keyword id="KW-0863">Zinc-finger</keyword>
<comment type="function">
    <molecule>Isoform Replicase polyprotein 1a</molecule>
    <text evidence="19">Multifunctional protein involved in the transcription and replication of viral RNAs. Contains the proteinases responsible for the cleavages of the polyprotein.</text>
</comment>
<comment type="function">
    <molecule>Non-structural protein 2</molecule>
    <text evidence="2">May play a role in the modulation of host cell survival signaling pathway by interacting with host PHB and PHB2 (By similarity). Indeed, these two proteins play a role in maintaining the functional integrity of the mitochondria and protecting cells from various stresses (By similarity).</text>
</comment>
<comment type="function">
    <molecule>Papain-like protease</molecule>
    <text evidence="2">Responsible for the cleavages located at the N-terminus of the replicase polyprotein (By similarity). In addition, PL-PRO possesses a deubiquitinating/deISGylating activity and processes both 'Lys-48'- and 'Lys-63'-linked polyubiquitin chains from cellular substrates (By similarity).</text>
</comment>
<comment type="function">
    <molecule>Non-structural protein 4</molecule>
    <text evidence="2">Plays a role in host membrane rearrangement that leads to creation of cytoplasmic double-membrane vesicles (DMV) necessary for viral replication (By similarity). Alone is able to induce paired membranes (By similarity). Coexpression of nsp3 and nsp4 does not result in the formation of DMVs (By similarity).</text>
</comment>
<comment type="function">
    <molecule>3C-like proteinase</molecule>
    <text evidence="10">Responsible for the majority of cleavages as it cleaves the C-terminus of replicase polyprotein at 11 sites. Recognizes substrates containing the core sequence [ILMVF]-Q-|-[SGACN]. Inhibited by the substrate-analog Cbz-Val-Asn-Ser-Thr-Leu-Gln-CMK.</text>
</comment>
<comment type="function">
    <molecule>Non-structural protein 7</molecule>
    <text evidence="2">Forms a hexadecamer with nsp8 (8 subunits of each) that may participate in viral replication by acting as a primase. Alternatively, may synthesize substantially longer products than oligonucleotide primers.</text>
</comment>
<comment type="function">
    <molecule>Non-structural protein 8</molecule>
    <text evidence="2">Forms a hexadecamer with nsp7 (8 subunits of each) that may participate in viral replication by acting as a primase. Alternatively, may synthesize substantially longer products than oligonucleotide primers.</text>
</comment>
<comment type="function">
    <molecule>Non-structural protein 9</molecule>
    <text evidence="2">Plays an essential role in viral replication by forming a homodimer that binds single-stranded RNA.</text>
</comment>
<comment type="function">
    <molecule>Non-structural protein 10</molecule>
    <text evidence="2">Plays a pivotal role in viral transcription by stimulating both nsp14 3'-5' exoribonuclease and nsp16 2'-O-methyltransferase activities (By similarity). Therefore plays an essential role in viral mRNAs cap methylation (By similarity).</text>
</comment>
<comment type="catalytic activity">
    <molecule>Papain-like protease</molecule>
    <reaction evidence="2">
        <text>Thiol-dependent hydrolysis of ester, thioester, amide, peptide and isopeptide bonds formed by the C-terminal Gly of ubiquitin (a 76-residue protein attached to proteins as an intracellular targeting signal).</text>
        <dbReference type="EC" id="3.4.19.12"/>
    </reaction>
</comment>
<comment type="cofactor">
    <molecule>Papain-like protease</molecule>
    <cofactor evidence="2">
        <name>Zn(2+)</name>
        <dbReference type="ChEBI" id="CHEBI:29105"/>
    </cofactor>
</comment>
<comment type="subunit">
    <molecule>Non-structural protein 2</molecule>
    <text evidence="2">Interacts with host PHB and PHB2.</text>
</comment>
<comment type="subunit">
    <molecule>Non-structural protein 4</molecule>
    <text evidence="2">Interacts with papain-like protease and non-structural protein 6.</text>
</comment>
<comment type="subunit">
    <molecule>3C-like proteinase</molecule>
    <text evidence="2">Monomer. Homodimer. Only the homodimer shows catalytic activity.</text>
</comment>
<comment type="subunit">
    <molecule>Non-structural protein 7</molecule>
    <text evidence="2">Eight copies of nsp7 and eight copies of nsp8 assemble to form a heterohexadecamer dsRNA-encircling ring structure.</text>
</comment>
<comment type="subunit">
    <molecule>Non-structural protein 8</molecule>
    <text evidence="2">Eight copies of nsp7 and eight copies of nsp8 assemble to form a heterohexadecamer dsRNA-encircling ring structure (By similarity). Interacts with ORF6 protein (By similarity).</text>
</comment>
<comment type="subunit">
    <molecule>Non-structural protein 9</molecule>
    <text evidence="2">Homodimer.</text>
</comment>
<comment type="subunit">
    <molecule>Non-structural protein 10</molecule>
    <text evidence="2">Homododecamer.</text>
</comment>
<comment type="subcellular location">
    <molecule>Papain-like protease</molecule>
    <subcellularLocation>
        <location evidence="4">Host endoplasmic reticulum membrane</location>
        <topology evidence="19">Multi-pass membrane protein</topology>
    </subcellularLocation>
    <subcellularLocation>
        <location evidence="2">Host cytoplasm</location>
    </subcellularLocation>
    <text evidence="4">Gammacoronaviruses induce membrane zippering to form zippered endoplasmic reticulum (zER).</text>
</comment>
<comment type="subcellular location">
    <molecule>Non-structural protein 4</molecule>
    <subcellularLocation>
        <location evidence="4">Host endoplasmic reticulum membrane</location>
        <topology evidence="19">Multi-pass membrane protein</topology>
    </subcellularLocation>
    <subcellularLocation>
        <location evidence="2">Host cytoplasm</location>
    </subcellularLocation>
    <text evidence="2 4">Localizes in virally-induced cytoplasmic double-membrane vesicles (By similarity). Gammacoronaviruses induce membrane zippering to form zippered endoplasmic reticulum (zER) (By similarity).</text>
</comment>
<comment type="subcellular location">
    <molecule>Non-structural protein 6</molecule>
    <subcellularLocation>
        <location evidence="4">Host endoplasmic reticulum membrane</location>
        <topology evidence="19">Multi-pass membrane protein</topology>
    </subcellularLocation>
    <text evidence="4">Gammacoronaviruses induce membrane zippering to form zippered endoplasmic reticulum (zER).</text>
</comment>
<comment type="subcellular location">
    <molecule>Non-structural protein 7</molecule>
    <subcellularLocation>
        <location evidence="1">Host cytoplasm</location>
        <location evidence="1">Host perinuclear region</location>
    </subcellularLocation>
    <subcellularLocation>
        <location evidence="5">Host cytoplasm</location>
    </subcellularLocation>
    <subcellularLocation>
        <location evidence="5">Host endoplasmic reticulum</location>
    </subcellularLocation>
    <text>nsp7, nsp8, nsp9 and nsp10 are localized in cytoplasmic foci, largely perinuclear. Late in infection, they merge into confluent complexes.</text>
</comment>
<comment type="subcellular location">
    <molecule>Non-structural protein 8</molecule>
    <subcellularLocation>
        <location evidence="2">Host cytoplasm</location>
        <location evidence="2">Host perinuclear region</location>
    </subcellularLocation>
    <subcellularLocation>
        <location evidence="5">Host cytoplasm</location>
    </subcellularLocation>
    <subcellularLocation>
        <location evidence="5">Host endoplasmic reticulum</location>
    </subcellularLocation>
    <text>nsp7, nsp8, nsp9 and nsp10 are localized in cytoplasmic foci, largely perinuclear. Late in infection, they merge into confluent complexes.</text>
</comment>
<comment type="subcellular location">
    <molecule>Non-structural protein 9</molecule>
    <subcellularLocation>
        <location evidence="1">Host cytoplasm</location>
        <location evidence="1">Host perinuclear region</location>
    </subcellularLocation>
    <subcellularLocation>
        <location evidence="5">Host cytoplasm</location>
    </subcellularLocation>
    <subcellularLocation>
        <location evidence="5">Host endoplasmic reticulum</location>
    </subcellularLocation>
    <text>nsp7, nsp8, nsp9 and nsp10 are localized in cytoplasmic foci, largely perinuclear. Late in infection, they merge into confluent complexes.</text>
</comment>
<comment type="subcellular location">
    <molecule>Non-structural protein 10</molecule>
    <subcellularLocation>
        <location evidence="1">Host cytoplasm</location>
        <location evidence="1">Host perinuclear region</location>
    </subcellularLocation>
    <subcellularLocation>
        <location evidence="5">Host cytoplasm</location>
    </subcellularLocation>
    <subcellularLocation>
        <location evidence="5">Host endoplasmic reticulum</location>
    </subcellularLocation>
    <text>nsp7, nsp8, nsp9 and nsp10 are localized in cytoplasmic foci, largely perinuclear. Late in infection, they merge into confluent complexes.</text>
</comment>
<comment type="alternative products">
    <event type="ribosomal frameshifting"/>
    <isoform>
        <id>P0C6V4-1</id>
        <name>Replicase polyprotein 1a</name>
        <name>pp1a</name>
        <name>ORF1a polyprotein</name>
        <sequence type="displayed"/>
    </isoform>
    <isoform>
        <id>P0C6Y2-1</id>
        <name>Replicase polyprotein 1ab</name>
        <name>pp1ab</name>
        <sequence type="external"/>
    </isoform>
    <text evidence="19">Isoform Replicase polyprotein 1ab is produced by -1 ribosomal frameshifting at the 1a-1b genes boundary. Isoform Replicase polyprotein 1a is produced by conventional translation.</text>
</comment>
<comment type="domain">
    <molecule>Papain-like protease</molecule>
    <text evidence="2">The hydrophobic region HD1 probably mediates the membrane association of the replication complex.</text>
</comment>
<comment type="domain">
    <molecule>Non-structural protein 4</molecule>
    <text evidence="2">The hydrophobic region HD2 probably mediates the membrane association of the replication complex.</text>
</comment>
<comment type="domain">
    <molecule>Non-structural protein 6</molecule>
    <text evidence="2">The hydrophobic region HD3 probably mediates the membrane association of the replication complex.</text>
</comment>
<comment type="PTM">
    <molecule>Isoform Replicase polyprotein 1a</molecule>
    <text evidence="2">Specific enzymatic cleavages in vivo by its own proteases yield mature proteins (By similarity). 3C-like proteinase nsp5 liberates nsps 6-16 from the polyprotein (By similarity). Papain-like and 3C-like proteinases are autocatalytically processed.</text>
</comment>
<comment type="PTM">
    <molecule>Non-structural protein 4</molecule>
    <text evidence="3">N-glycosylated.</text>
</comment>
<comment type="similarity">
    <text evidence="19">Belongs to the coronaviruses polyprotein 1ab family.</text>
</comment>